<feature type="chain" id="PRO_1000085271" description="Chaperone protein DnaJ">
    <location>
        <begin position="1"/>
        <end position="371"/>
    </location>
</feature>
<feature type="domain" description="J" evidence="1">
    <location>
        <begin position="4"/>
        <end position="68"/>
    </location>
</feature>
<feature type="repeat" description="CXXCXGXG motif">
    <location>
        <begin position="147"/>
        <end position="154"/>
    </location>
</feature>
<feature type="repeat" description="CXXCXGXG motif">
    <location>
        <begin position="164"/>
        <end position="171"/>
    </location>
</feature>
<feature type="repeat" description="CXXCXGXG motif">
    <location>
        <begin position="186"/>
        <end position="193"/>
    </location>
</feature>
<feature type="repeat" description="CXXCXGXG motif">
    <location>
        <begin position="200"/>
        <end position="207"/>
    </location>
</feature>
<feature type="zinc finger region" description="CR-type" evidence="1">
    <location>
        <begin position="134"/>
        <end position="212"/>
    </location>
</feature>
<feature type="binding site" evidence="1">
    <location>
        <position position="147"/>
    </location>
    <ligand>
        <name>Zn(2+)</name>
        <dbReference type="ChEBI" id="CHEBI:29105"/>
        <label>1</label>
    </ligand>
</feature>
<feature type="binding site" evidence="1">
    <location>
        <position position="150"/>
    </location>
    <ligand>
        <name>Zn(2+)</name>
        <dbReference type="ChEBI" id="CHEBI:29105"/>
        <label>1</label>
    </ligand>
</feature>
<feature type="binding site" evidence="1">
    <location>
        <position position="164"/>
    </location>
    <ligand>
        <name>Zn(2+)</name>
        <dbReference type="ChEBI" id="CHEBI:29105"/>
        <label>2</label>
    </ligand>
</feature>
<feature type="binding site" evidence="1">
    <location>
        <position position="167"/>
    </location>
    <ligand>
        <name>Zn(2+)</name>
        <dbReference type="ChEBI" id="CHEBI:29105"/>
        <label>2</label>
    </ligand>
</feature>
<feature type="binding site" evidence="1">
    <location>
        <position position="186"/>
    </location>
    <ligand>
        <name>Zn(2+)</name>
        <dbReference type="ChEBI" id="CHEBI:29105"/>
        <label>2</label>
    </ligand>
</feature>
<feature type="binding site" evidence="1">
    <location>
        <position position="189"/>
    </location>
    <ligand>
        <name>Zn(2+)</name>
        <dbReference type="ChEBI" id="CHEBI:29105"/>
        <label>2</label>
    </ligand>
</feature>
<feature type="binding site" evidence="1">
    <location>
        <position position="200"/>
    </location>
    <ligand>
        <name>Zn(2+)</name>
        <dbReference type="ChEBI" id="CHEBI:29105"/>
        <label>1</label>
    </ligand>
</feature>
<feature type="binding site" evidence="1">
    <location>
        <position position="203"/>
    </location>
    <ligand>
        <name>Zn(2+)</name>
        <dbReference type="ChEBI" id="CHEBI:29105"/>
        <label>1</label>
    </ligand>
</feature>
<dbReference type="EMBL" id="CP000847">
    <property type="protein sequence ID" value="ABV74583.1"/>
    <property type="molecule type" value="Genomic_DNA"/>
</dbReference>
<dbReference type="RefSeq" id="WP_012013453.1">
    <property type="nucleotide sequence ID" value="NC_009881.1"/>
</dbReference>
<dbReference type="SMR" id="A8GMF8"/>
<dbReference type="STRING" id="293614.A1C_01325"/>
<dbReference type="KEGG" id="rak:A1C_01325"/>
<dbReference type="eggNOG" id="COG0484">
    <property type="taxonomic scope" value="Bacteria"/>
</dbReference>
<dbReference type="HOGENOM" id="CLU_017633_0_7_5"/>
<dbReference type="Proteomes" id="UP000006830">
    <property type="component" value="Chromosome"/>
</dbReference>
<dbReference type="GO" id="GO:0005737">
    <property type="term" value="C:cytoplasm"/>
    <property type="evidence" value="ECO:0007669"/>
    <property type="project" value="UniProtKB-SubCell"/>
</dbReference>
<dbReference type="GO" id="GO:0005524">
    <property type="term" value="F:ATP binding"/>
    <property type="evidence" value="ECO:0007669"/>
    <property type="project" value="InterPro"/>
</dbReference>
<dbReference type="GO" id="GO:0031072">
    <property type="term" value="F:heat shock protein binding"/>
    <property type="evidence" value="ECO:0007669"/>
    <property type="project" value="InterPro"/>
</dbReference>
<dbReference type="GO" id="GO:0051082">
    <property type="term" value="F:unfolded protein binding"/>
    <property type="evidence" value="ECO:0007669"/>
    <property type="project" value="UniProtKB-UniRule"/>
</dbReference>
<dbReference type="GO" id="GO:0008270">
    <property type="term" value="F:zinc ion binding"/>
    <property type="evidence" value="ECO:0007669"/>
    <property type="project" value="UniProtKB-UniRule"/>
</dbReference>
<dbReference type="GO" id="GO:0051085">
    <property type="term" value="P:chaperone cofactor-dependent protein refolding"/>
    <property type="evidence" value="ECO:0007669"/>
    <property type="project" value="TreeGrafter"/>
</dbReference>
<dbReference type="GO" id="GO:0006260">
    <property type="term" value="P:DNA replication"/>
    <property type="evidence" value="ECO:0007669"/>
    <property type="project" value="UniProtKB-KW"/>
</dbReference>
<dbReference type="GO" id="GO:0042026">
    <property type="term" value="P:protein refolding"/>
    <property type="evidence" value="ECO:0007669"/>
    <property type="project" value="TreeGrafter"/>
</dbReference>
<dbReference type="GO" id="GO:0009408">
    <property type="term" value="P:response to heat"/>
    <property type="evidence" value="ECO:0007669"/>
    <property type="project" value="InterPro"/>
</dbReference>
<dbReference type="CDD" id="cd06257">
    <property type="entry name" value="DnaJ"/>
    <property type="match status" value="1"/>
</dbReference>
<dbReference type="CDD" id="cd10747">
    <property type="entry name" value="DnaJ_C"/>
    <property type="match status" value="1"/>
</dbReference>
<dbReference type="FunFam" id="1.10.287.110:FF:000153">
    <property type="entry name" value="Chaperone protein DnaJ"/>
    <property type="match status" value="1"/>
</dbReference>
<dbReference type="FunFam" id="2.10.230.10:FF:000002">
    <property type="entry name" value="Molecular chaperone DnaJ"/>
    <property type="match status" value="1"/>
</dbReference>
<dbReference type="FunFam" id="2.60.260.20:FF:000004">
    <property type="entry name" value="Molecular chaperone DnaJ"/>
    <property type="match status" value="1"/>
</dbReference>
<dbReference type="Gene3D" id="1.10.287.110">
    <property type="entry name" value="DnaJ domain"/>
    <property type="match status" value="1"/>
</dbReference>
<dbReference type="Gene3D" id="2.10.230.10">
    <property type="entry name" value="Heat shock protein DnaJ, cysteine-rich domain"/>
    <property type="match status" value="1"/>
</dbReference>
<dbReference type="Gene3D" id="2.60.260.20">
    <property type="entry name" value="Urease metallochaperone UreE, N-terminal domain"/>
    <property type="match status" value="2"/>
</dbReference>
<dbReference type="HAMAP" id="MF_01152">
    <property type="entry name" value="DnaJ"/>
    <property type="match status" value="1"/>
</dbReference>
<dbReference type="InterPro" id="IPR012724">
    <property type="entry name" value="DnaJ"/>
</dbReference>
<dbReference type="InterPro" id="IPR002939">
    <property type="entry name" value="DnaJ_C"/>
</dbReference>
<dbReference type="InterPro" id="IPR001623">
    <property type="entry name" value="DnaJ_domain"/>
</dbReference>
<dbReference type="InterPro" id="IPR018253">
    <property type="entry name" value="DnaJ_domain_CS"/>
</dbReference>
<dbReference type="InterPro" id="IPR008971">
    <property type="entry name" value="HSP40/DnaJ_pept-bd"/>
</dbReference>
<dbReference type="InterPro" id="IPR001305">
    <property type="entry name" value="HSP_DnaJ_Cys-rich_dom"/>
</dbReference>
<dbReference type="InterPro" id="IPR036410">
    <property type="entry name" value="HSP_DnaJ_Cys-rich_dom_sf"/>
</dbReference>
<dbReference type="InterPro" id="IPR036869">
    <property type="entry name" value="J_dom_sf"/>
</dbReference>
<dbReference type="NCBIfam" id="TIGR02349">
    <property type="entry name" value="DnaJ_bact"/>
    <property type="match status" value="1"/>
</dbReference>
<dbReference type="NCBIfam" id="NF008035">
    <property type="entry name" value="PRK10767.1"/>
    <property type="match status" value="1"/>
</dbReference>
<dbReference type="NCBIfam" id="NF010893">
    <property type="entry name" value="PRK14300.1"/>
    <property type="match status" value="1"/>
</dbReference>
<dbReference type="PANTHER" id="PTHR43096">
    <property type="entry name" value="DNAJ HOMOLOG 1, MITOCHONDRIAL-RELATED"/>
    <property type="match status" value="1"/>
</dbReference>
<dbReference type="PANTHER" id="PTHR43096:SF52">
    <property type="entry name" value="DNAJ HOMOLOG 1, MITOCHONDRIAL-RELATED"/>
    <property type="match status" value="1"/>
</dbReference>
<dbReference type="Pfam" id="PF00226">
    <property type="entry name" value="DnaJ"/>
    <property type="match status" value="1"/>
</dbReference>
<dbReference type="Pfam" id="PF01556">
    <property type="entry name" value="DnaJ_C"/>
    <property type="match status" value="1"/>
</dbReference>
<dbReference type="Pfam" id="PF00684">
    <property type="entry name" value="DnaJ_CXXCXGXG"/>
    <property type="match status" value="1"/>
</dbReference>
<dbReference type="PRINTS" id="PR00625">
    <property type="entry name" value="JDOMAIN"/>
</dbReference>
<dbReference type="SMART" id="SM00271">
    <property type="entry name" value="DnaJ"/>
    <property type="match status" value="1"/>
</dbReference>
<dbReference type="SUPFAM" id="SSF46565">
    <property type="entry name" value="Chaperone J-domain"/>
    <property type="match status" value="1"/>
</dbReference>
<dbReference type="SUPFAM" id="SSF57938">
    <property type="entry name" value="DnaJ/Hsp40 cysteine-rich domain"/>
    <property type="match status" value="1"/>
</dbReference>
<dbReference type="SUPFAM" id="SSF49493">
    <property type="entry name" value="HSP40/DnaJ peptide-binding domain"/>
    <property type="match status" value="2"/>
</dbReference>
<dbReference type="PROSITE" id="PS00636">
    <property type="entry name" value="DNAJ_1"/>
    <property type="match status" value="1"/>
</dbReference>
<dbReference type="PROSITE" id="PS50076">
    <property type="entry name" value="DNAJ_2"/>
    <property type="match status" value="1"/>
</dbReference>
<dbReference type="PROSITE" id="PS51188">
    <property type="entry name" value="ZF_CR"/>
    <property type="match status" value="1"/>
</dbReference>
<comment type="function">
    <text evidence="1">Participates actively in the response to hyperosmotic and heat shock by preventing the aggregation of stress-denatured proteins and by disaggregating proteins, also in an autonomous, DnaK-independent fashion. Unfolded proteins bind initially to DnaJ; upon interaction with the DnaJ-bound protein, DnaK hydrolyzes its bound ATP, resulting in the formation of a stable complex. GrpE releases ADP from DnaK; ATP binding to DnaK triggers the release of the substrate protein, thus completing the reaction cycle. Several rounds of ATP-dependent interactions between DnaJ, DnaK and GrpE are required for fully efficient folding. Also involved, together with DnaK and GrpE, in the DNA replication of plasmids through activation of initiation proteins.</text>
</comment>
<comment type="cofactor">
    <cofactor evidence="1">
        <name>Zn(2+)</name>
        <dbReference type="ChEBI" id="CHEBI:29105"/>
    </cofactor>
    <text evidence="1">Binds 2 Zn(2+) ions per monomer.</text>
</comment>
<comment type="subunit">
    <text evidence="1">Homodimer.</text>
</comment>
<comment type="subcellular location">
    <subcellularLocation>
        <location evidence="1">Cytoplasm</location>
    </subcellularLocation>
</comment>
<comment type="domain">
    <text evidence="1">The J domain is necessary and sufficient to stimulate DnaK ATPase activity. Zinc center 1 plays an important role in the autonomous, DnaK-independent chaperone activity of DnaJ. Zinc center 2 is essential for interaction with DnaK and for DnaJ activity.</text>
</comment>
<comment type="similarity">
    <text evidence="1">Belongs to the DnaJ family.</text>
</comment>
<reference key="1">
    <citation type="submission" date="2007-09" db="EMBL/GenBank/DDBJ databases">
        <title>Complete genome sequence of Rickettsia akari.</title>
        <authorList>
            <person name="Madan A."/>
            <person name="Fahey J."/>
            <person name="Helton E."/>
            <person name="Ketteman M."/>
            <person name="Madan A."/>
            <person name="Rodrigues S."/>
            <person name="Sanchez A."/>
            <person name="Whiting M."/>
            <person name="Dasch G."/>
            <person name="Eremeeva M."/>
        </authorList>
    </citation>
    <scope>NUCLEOTIDE SEQUENCE [LARGE SCALE GENOMIC DNA]</scope>
    <source>
        <strain>Hartford</strain>
    </source>
</reference>
<keyword id="KW-0143">Chaperone</keyword>
<keyword id="KW-0963">Cytoplasm</keyword>
<keyword id="KW-0235">DNA replication</keyword>
<keyword id="KW-0479">Metal-binding</keyword>
<keyword id="KW-0677">Repeat</keyword>
<keyword id="KW-0346">Stress response</keyword>
<keyword id="KW-0862">Zinc</keyword>
<keyword id="KW-0863">Zinc-finger</keyword>
<gene>
    <name evidence="1" type="primary">dnaJ</name>
    <name type="ordered locus">A1C_01325</name>
</gene>
<organism>
    <name type="scientific">Rickettsia akari (strain Hartford)</name>
    <dbReference type="NCBI Taxonomy" id="293614"/>
    <lineage>
        <taxon>Bacteria</taxon>
        <taxon>Pseudomonadati</taxon>
        <taxon>Pseudomonadota</taxon>
        <taxon>Alphaproteobacteria</taxon>
        <taxon>Rickettsiales</taxon>
        <taxon>Rickettsiaceae</taxon>
        <taxon>Rickettsieae</taxon>
        <taxon>Rickettsia</taxon>
        <taxon>spotted fever group</taxon>
    </lineage>
</organism>
<evidence type="ECO:0000255" key="1">
    <source>
        <dbReference type="HAMAP-Rule" id="MF_01152"/>
    </source>
</evidence>
<protein>
    <recommendedName>
        <fullName evidence="1">Chaperone protein DnaJ</fullName>
    </recommendedName>
</protein>
<sequence>MSQDYYKILGVSKTASQADLKKAYLKLAKQYHPDTTDDKDAEKKFKEINRAYDVLKDEQKRAAYDRFGHDTFQNQQSRGGGGSHAGFHHDINDIFGDFFSDFMGGGRRKPTSSKARGSDLKYDLTINLEEAFHGIEKNISFSSEVKCDTCHGSGSEKGETVTTCDACGGVGATRIQQGFFTIEQACHKCKGNGQIIKNPCKKCHGMGRCHKQRNLSVNIPAGVENGTRIRHTGEGEAGIRGGNSGDLYVDIAITPHDIYKVDGANLHCKLPISFVNAALGGEIEVPVIEGRKVNLTIPAGTQNGDQLRLRSKGMPKMRSTIRGDMITHIHIEVPKNLSKRQCELLEEFKKESISEKENDGSFFNKMKSLWS</sequence>
<name>DNAJ_RICAH</name>
<accession>A8GMF8</accession>
<proteinExistence type="inferred from homology"/>